<evidence type="ECO:0000255" key="1">
    <source>
        <dbReference type="HAMAP-Rule" id="MF_01514"/>
    </source>
</evidence>
<comment type="subcellular location">
    <subcellularLocation>
        <location evidence="1">Cell membrane</location>
        <topology evidence="1">Multi-pass membrane protein</topology>
    </subcellularLocation>
</comment>
<comment type="similarity">
    <text evidence="1">Belongs to the UPF0314 family.</text>
</comment>
<reference key="1">
    <citation type="journal article" date="2001" name="Science">
        <title>The genome of the natural genetic engineer Agrobacterium tumefaciens C58.</title>
        <authorList>
            <person name="Wood D.W."/>
            <person name="Setubal J.C."/>
            <person name="Kaul R."/>
            <person name="Monks D.E."/>
            <person name="Kitajima J.P."/>
            <person name="Okura V.K."/>
            <person name="Zhou Y."/>
            <person name="Chen L."/>
            <person name="Wood G.E."/>
            <person name="Almeida N.F. Jr."/>
            <person name="Woo L."/>
            <person name="Chen Y."/>
            <person name="Paulsen I.T."/>
            <person name="Eisen J.A."/>
            <person name="Karp P.D."/>
            <person name="Bovee D. Sr."/>
            <person name="Chapman P."/>
            <person name="Clendenning J."/>
            <person name="Deatherage G."/>
            <person name="Gillet W."/>
            <person name="Grant C."/>
            <person name="Kutyavin T."/>
            <person name="Levy R."/>
            <person name="Li M.-J."/>
            <person name="McClelland E."/>
            <person name="Palmieri A."/>
            <person name="Raymond C."/>
            <person name="Rouse G."/>
            <person name="Saenphimmachak C."/>
            <person name="Wu Z."/>
            <person name="Romero P."/>
            <person name="Gordon D."/>
            <person name="Zhang S."/>
            <person name="Yoo H."/>
            <person name="Tao Y."/>
            <person name="Biddle P."/>
            <person name="Jung M."/>
            <person name="Krespan W."/>
            <person name="Perry M."/>
            <person name="Gordon-Kamm B."/>
            <person name="Liao L."/>
            <person name="Kim S."/>
            <person name="Hendrick C."/>
            <person name="Zhao Z.-Y."/>
            <person name="Dolan M."/>
            <person name="Chumley F."/>
            <person name="Tingey S.V."/>
            <person name="Tomb J.-F."/>
            <person name="Gordon M.P."/>
            <person name="Olson M.V."/>
            <person name="Nester E.W."/>
        </authorList>
    </citation>
    <scope>NUCLEOTIDE SEQUENCE [LARGE SCALE GENOMIC DNA]</scope>
    <source>
        <strain>C58 / ATCC 33970</strain>
    </source>
</reference>
<reference key="2">
    <citation type="journal article" date="2001" name="Science">
        <title>Genome sequence of the plant pathogen and biotechnology agent Agrobacterium tumefaciens C58.</title>
        <authorList>
            <person name="Goodner B."/>
            <person name="Hinkle G."/>
            <person name="Gattung S."/>
            <person name="Miller N."/>
            <person name="Blanchard M."/>
            <person name="Qurollo B."/>
            <person name="Goldman B.S."/>
            <person name="Cao Y."/>
            <person name="Askenazi M."/>
            <person name="Halling C."/>
            <person name="Mullin L."/>
            <person name="Houmiel K."/>
            <person name="Gordon J."/>
            <person name="Vaudin M."/>
            <person name="Iartchouk O."/>
            <person name="Epp A."/>
            <person name="Liu F."/>
            <person name="Wollam C."/>
            <person name="Allinger M."/>
            <person name="Doughty D."/>
            <person name="Scott C."/>
            <person name="Lappas C."/>
            <person name="Markelz B."/>
            <person name="Flanagan C."/>
            <person name="Crowell C."/>
            <person name="Gurson J."/>
            <person name="Lomo C."/>
            <person name="Sear C."/>
            <person name="Strub G."/>
            <person name="Cielo C."/>
            <person name="Slater S."/>
        </authorList>
    </citation>
    <scope>NUCLEOTIDE SEQUENCE [LARGE SCALE GENOMIC DNA]</scope>
    <source>
        <strain>C58 / ATCC 33970</strain>
    </source>
</reference>
<name>Y8092_AGRFC</name>
<sequence length="198" mass="22573">MTVAEMSASRSRSLRWFGVAAGLLLLQIVILYAMGRIPICECGYVKLFEPGVNTPGNSQHLADWYTPSHIIHGFLFYWFAWLLFRNKPFSMRLSFAVLIEAAWELLENSPIIIDRYRTATTALGYTGDSILNSAMDTVFMALGFLFAARVPVWLTVVIAIFFEIFTGWLIRDNLTLNVVMLVWPVDVIKEWQNALPQM</sequence>
<gene>
    <name type="ordered locus">Atu8092</name>
    <name type="ORF">AGR_C_4880</name>
    <name type="ORF">Atu2691.1</name>
</gene>
<feature type="chain" id="PRO_0000217144" description="UPF0314 protein Atu8092">
    <location>
        <begin position="1"/>
        <end position="198"/>
    </location>
</feature>
<feature type="transmembrane region" description="Helical" evidence="1">
    <location>
        <begin position="14"/>
        <end position="34"/>
    </location>
</feature>
<feature type="transmembrane region" description="Helical" evidence="1">
    <location>
        <begin position="64"/>
        <end position="84"/>
    </location>
</feature>
<feature type="transmembrane region" description="Helical" evidence="1">
    <location>
        <begin position="150"/>
        <end position="170"/>
    </location>
</feature>
<keyword id="KW-1003">Cell membrane</keyword>
<keyword id="KW-0472">Membrane</keyword>
<keyword id="KW-1185">Reference proteome</keyword>
<keyword id="KW-0812">Transmembrane</keyword>
<keyword id="KW-1133">Transmembrane helix</keyword>
<accession>Q8U527</accession>
<accession>A8WFE2</accession>
<proteinExistence type="inferred from homology"/>
<protein>
    <recommendedName>
        <fullName evidence="1">UPF0314 protein Atu8092</fullName>
    </recommendedName>
</protein>
<dbReference type="EMBL" id="AE007869">
    <property type="protein sequence ID" value="ABW89719.1"/>
    <property type="molecule type" value="Genomic_DNA"/>
</dbReference>
<dbReference type="PIR" id="C97682">
    <property type="entry name" value="C97682"/>
</dbReference>
<dbReference type="RefSeq" id="WP_010972622.1">
    <property type="nucleotide sequence ID" value="NC_003062.2"/>
</dbReference>
<dbReference type="RefSeq" id="YP_001542595.1">
    <property type="nucleotide sequence ID" value="NC_003062.2"/>
</dbReference>
<dbReference type="STRING" id="176299.Atu8092"/>
<dbReference type="EnsemblBacteria" id="ABW89719">
    <property type="protein sequence ID" value="ABW89719"/>
    <property type="gene ID" value="Atu8092"/>
</dbReference>
<dbReference type="GeneID" id="5729696"/>
<dbReference type="KEGG" id="atu:Atu8092"/>
<dbReference type="PATRIC" id="fig|176299.10.peg.2701"/>
<dbReference type="eggNOG" id="ENOG502ZZUX">
    <property type="taxonomic scope" value="Bacteria"/>
</dbReference>
<dbReference type="HOGENOM" id="CLU_1395337_0_0_5"/>
<dbReference type="OrthoDB" id="9811954at2"/>
<dbReference type="PhylomeDB" id="Q8U527"/>
<dbReference type="Proteomes" id="UP000000813">
    <property type="component" value="Chromosome circular"/>
</dbReference>
<dbReference type="GO" id="GO:0005886">
    <property type="term" value="C:plasma membrane"/>
    <property type="evidence" value="ECO:0007669"/>
    <property type="project" value="UniProtKB-SubCell"/>
</dbReference>
<dbReference type="HAMAP" id="MF_01514">
    <property type="entry name" value="UPF0314"/>
    <property type="match status" value="1"/>
</dbReference>
<dbReference type="InterPro" id="IPR019691">
    <property type="entry name" value="DUF2585"/>
</dbReference>
<dbReference type="NCBIfam" id="NF002099">
    <property type="entry name" value="PRK00944.1"/>
    <property type="match status" value="1"/>
</dbReference>
<dbReference type="Pfam" id="PF10755">
    <property type="entry name" value="DUF2585"/>
    <property type="match status" value="1"/>
</dbReference>
<organism>
    <name type="scientific">Agrobacterium fabrum (strain C58 / ATCC 33970)</name>
    <name type="common">Agrobacterium tumefaciens (strain C58)</name>
    <dbReference type="NCBI Taxonomy" id="176299"/>
    <lineage>
        <taxon>Bacteria</taxon>
        <taxon>Pseudomonadati</taxon>
        <taxon>Pseudomonadota</taxon>
        <taxon>Alphaproteobacteria</taxon>
        <taxon>Hyphomicrobiales</taxon>
        <taxon>Rhizobiaceae</taxon>
        <taxon>Rhizobium/Agrobacterium group</taxon>
        <taxon>Agrobacterium</taxon>
        <taxon>Agrobacterium tumefaciens complex</taxon>
    </lineage>
</organism>